<keyword id="KW-0963">Cytoplasm</keyword>
<keyword id="KW-0671">Queuosine biosynthesis</keyword>
<keyword id="KW-0949">S-adenosyl-L-methionine</keyword>
<keyword id="KW-0808">Transferase</keyword>
<dbReference type="EC" id="2.4.99.17" evidence="1"/>
<dbReference type="EMBL" id="CP000444">
    <property type="protein sequence ID" value="ABI42445.1"/>
    <property type="molecule type" value="Genomic_DNA"/>
</dbReference>
<dbReference type="SMR" id="Q0HWR0"/>
<dbReference type="KEGG" id="shm:Shewmr7_1446"/>
<dbReference type="HOGENOM" id="CLU_039110_1_0_6"/>
<dbReference type="UniPathway" id="UPA00392"/>
<dbReference type="GO" id="GO:0005737">
    <property type="term" value="C:cytoplasm"/>
    <property type="evidence" value="ECO:0007669"/>
    <property type="project" value="UniProtKB-SubCell"/>
</dbReference>
<dbReference type="GO" id="GO:0051075">
    <property type="term" value="F:S-adenosylmethionine:tRNA ribosyltransferase-isomerase activity"/>
    <property type="evidence" value="ECO:0007669"/>
    <property type="project" value="UniProtKB-EC"/>
</dbReference>
<dbReference type="GO" id="GO:0008616">
    <property type="term" value="P:queuosine biosynthetic process"/>
    <property type="evidence" value="ECO:0007669"/>
    <property type="project" value="UniProtKB-UniRule"/>
</dbReference>
<dbReference type="GO" id="GO:0002099">
    <property type="term" value="P:tRNA wobble guanine modification"/>
    <property type="evidence" value="ECO:0007669"/>
    <property type="project" value="TreeGrafter"/>
</dbReference>
<dbReference type="FunFam" id="2.40.10.240:FF:000001">
    <property type="entry name" value="S-adenosylmethionine:tRNA ribosyltransferase-isomerase"/>
    <property type="match status" value="1"/>
</dbReference>
<dbReference type="FunFam" id="3.40.1780.10:FF:000001">
    <property type="entry name" value="S-adenosylmethionine:tRNA ribosyltransferase-isomerase"/>
    <property type="match status" value="1"/>
</dbReference>
<dbReference type="Gene3D" id="2.40.10.240">
    <property type="entry name" value="QueA-like"/>
    <property type="match status" value="1"/>
</dbReference>
<dbReference type="Gene3D" id="3.40.1780.10">
    <property type="entry name" value="QueA-like"/>
    <property type="match status" value="1"/>
</dbReference>
<dbReference type="HAMAP" id="MF_00113">
    <property type="entry name" value="QueA"/>
    <property type="match status" value="1"/>
</dbReference>
<dbReference type="InterPro" id="IPR003699">
    <property type="entry name" value="QueA"/>
</dbReference>
<dbReference type="InterPro" id="IPR042118">
    <property type="entry name" value="QueA_dom1"/>
</dbReference>
<dbReference type="InterPro" id="IPR042119">
    <property type="entry name" value="QueA_dom2"/>
</dbReference>
<dbReference type="InterPro" id="IPR036100">
    <property type="entry name" value="QueA_sf"/>
</dbReference>
<dbReference type="NCBIfam" id="NF001140">
    <property type="entry name" value="PRK00147.1"/>
    <property type="match status" value="1"/>
</dbReference>
<dbReference type="NCBIfam" id="TIGR00113">
    <property type="entry name" value="queA"/>
    <property type="match status" value="1"/>
</dbReference>
<dbReference type="PANTHER" id="PTHR30307">
    <property type="entry name" value="S-ADENOSYLMETHIONINE:TRNA RIBOSYLTRANSFERASE-ISOMERASE"/>
    <property type="match status" value="1"/>
</dbReference>
<dbReference type="PANTHER" id="PTHR30307:SF0">
    <property type="entry name" value="S-ADENOSYLMETHIONINE:TRNA RIBOSYLTRANSFERASE-ISOMERASE"/>
    <property type="match status" value="1"/>
</dbReference>
<dbReference type="Pfam" id="PF02547">
    <property type="entry name" value="Queuosine_synth"/>
    <property type="match status" value="1"/>
</dbReference>
<dbReference type="SUPFAM" id="SSF111337">
    <property type="entry name" value="QueA-like"/>
    <property type="match status" value="1"/>
</dbReference>
<protein>
    <recommendedName>
        <fullName evidence="1">S-adenosylmethionine:tRNA ribosyltransferase-isomerase</fullName>
        <ecNumber evidence="1">2.4.99.17</ecNumber>
    </recommendedName>
    <alternativeName>
        <fullName evidence="1">Queuosine biosynthesis protein QueA</fullName>
    </alternativeName>
</protein>
<sequence>MRVTDFSFDLPDELIARYPMAQRNASRLLTLDGNTGTLADKQFTDLLGMINPGDLMVFNNTRVIPARLFGQKASGGKLEILVERMLDDKRILAHVRSSKSPKVDSIIHLDGGYEMKMAARHDALFELELLSDLTILEVLEAVGHMPLPPYIDRPDEDADKERYQTVYNQNPGAVAAPTAGLHFDDAMLEALKAKGVNIAFVTLHVGAGTFQPVRVDNVLEHKMHSEWANVPQDVVDLIVQTKAAGKRVVAVGTTSVRSLESAARASEGELKAFSGDTDIFIYPGYQFQIVDAMITNFHLPESTLIMLVSAFAGFDHVMAAYQHAITQKYRFFSYGDAMFVTKKAH</sequence>
<evidence type="ECO:0000255" key="1">
    <source>
        <dbReference type="HAMAP-Rule" id="MF_00113"/>
    </source>
</evidence>
<organism>
    <name type="scientific">Shewanella sp. (strain MR-7)</name>
    <dbReference type="NCBI Taxonomy" id="60481"/>
    <lineage>
        <taxon>Bacteria</taxon>
        <taxon>Pseudomonadati</taxon>
        <taxon>Pseudomonadota</taxon>
        <taxon>Gammaproteobacteria</taxon>
        <taxon>Alteromonadales</taxon>
        <taxon>Shewanellaceae</taxon>
        <taxon>Shewanella</taxon>
    </lineage>
</organism>
<gene>
    <name evidence="1" type="primary">queA</name>
    <name type="ordered locus">Shewmr7_1446</name>
</gene>
<accession>Q0HWR0</accession>
<comment type="function">
    <text evidence="1">Transfers and isomerizes the ribose moiety from AdoMet to the 7-aminomethyl group of 7-deazaguanine (preQ1-tRNA) to give epoxyqueuosine (oQ-tRNA).</text>
</comment>
<comment type="catalytic activity">
    <reaction evidence="1">
        <text>7-aminomethyl-7-carbaguanosine(34) in tRNA + S-adenosyl-L-methionine = epoxyqueuosine(34) in tRNA + adenine + L-methionine + 2 H(+)</text>
        <dbReference type="Rhea" id="RHEA:32155"/>
        <dbReference type="Rhea" id="RHEA-COMP:10342"/>
        <dbReference type="Rhea" id="RHEA-COMP:18582"/>
        <dbReference type="ChEBI" id="CHEBI:15378"/>
        <dbReference type="ChEBI" id="CHEBI:16708"/>
        <dbReference type="ChEBI" id="CHEBI:57844"/>
        <dbReference type="ChEBI" id="CHEBI:59789"/>
        <dbReference type="ChEBI" id="CHEBI:82833"/>
        <dbReference type="ChEBI" id="CHEBI:194443"/>
        <dbReference type="EC" id="2.4.99.17"/>
    </reaction>
</comment>
<comment type="pathway">
    <text evidence="1">tRNA modification; tRNA-queuosine biosynthesis.</text>
</comment>
<comment type="subunit">
    <text evidence="1">Monomer.</text>
</comment>
<comment type="subcellular location">
    <subcellularLocation>
        <location evidence="1">Cytoplasm</location>
    </subcellularLocation>
</comment>
<comment type="similarity">
    <text evidence="1">Belongs to the QueA family.</text>
</comment>
<name>QUEA_SHESR</name>
<proteinExistence type="inferred from homology"/>
<feature type="chain" id="PRO_1000015276" description="S-adenosylmethionine:tRNA ribosyltransferase-isomerase">
    <location>
        <begin position="1"/>
        <end position="345"/>
    </location>
</feature>
<reference key="1">
    <citation type="submission" date="2006-08" db="EMBL/GenBank/DDBJ databases">
        <title>Complete sequence of chromosome 1 of Shewanella sp. MR-7.</title>
        <authorList>
            <person name="Copeland A."/>
            <person name="Lucas S."/>
            <person name="Lapidus A."/>
            <person name="Barry K."/>
            <person name="Detter J.C."/>
            <person name="Glavina del Rio T."/>
            <person name="Hammon N."/>
            <person name="Israni S."/>
            <person name="Dalin E."/>
            <person name="Tice H."/>
            <person name="Pitluck S."/>
            <person name="Kiss H."/>
            <person name="Brettin T."/>
            <person name="Bruce D."/>
            <person name="Han C."/>
            <person name="Tapia R."/>
            <person name="Gilna P."/>
            <person name="Schmutz J."/>
            <person name="Larimer F."/>
            <person name="Land M."/>
            <person name="Hauser L."/>
            <person name="Kyrpides N."/>
            <person name="Mikhailova N."/>
            <person name="Nealson K."/>
            <person name="Konstantinidis K."/>
            <person name="Klappenbach J."/>
            <person name="Tiedje J."/>
            <person name="Richardson P."/>
        </authorList>
    </citation>
    <scope>NUCLEOTIDE SEQUENCE [LARGE SCALE GENOMIC DNA]</scope>
    <source>
        <strain>MR-7</strain>
    </source>
</reference>